<comment type="function">
    <text evidence="3">Catalyzes the oxidative phosphorylation of glyceraldehyde 3-phosphate (G3P) to 1,3-bisphosphoglycerate (BPG) using the cofactor NAD. The first reaction step involves the formation of a hemiacetal intermediate between G3P and a cysteine residue, and this hemiacetal intermediate is then oxidized to a thioester, with concomitant reduction of NAD to NADH. The reduced NADH is then exchanged with the second NAD, and the thioester is attacked by a nucleophilic inorganic phosphate to produce BPG.</text>
</comment>
<comment type="function">
    <text evidence="7">In vitro binds to human CD209 (DC-SIGN) and may help mediate adherence to host cells (PubMed:21203928).</text>
</comment>
<comment type="catalytic activity">
    <reaction evidence="6">
        <text>D-glyceraldehyde 3-phosphate + phosphate + NAD(+) = (2R)-3-phospho-glyceroyl phosphate + NADH + H(+)</text>
        <dbReference type="Rhea" id="RHEA:10300"/>
        <dbReference type="ChEBI" id="CHEBI:15378"/>
        <dbReference type="ChEBI" id="CHEBI:43474"/>
        <dbReference type="ChEBI" id="CHEBI:57540"/>
        <dbReference type="ChEBI" id="CHEBI:57604"/>
        <dbReference type="ChEBI" id="CHEBI:57945"/>
        <dbReference type="ChEBI" id="CHEBI:59776"/>
        <dbReference type="EC" id="1.2.1.12"/>
    </reaction>
</comment>
<comment type="pathway">
    <text evidence="8">Carbohydrate degradation; glycolysis; pyruvate from D-glyceraldehyde 3-phosphate: step 1/5.</text>
</comment>
<comment type="subunit">
    <text evidence="2 7">Homotetramer (By similarity). Able to bind to host (human) CD209 (PubMed:21203928).</text>
</comment>
<comment type="subcellular location">
    <subcellularLocation>
        <location evidence="8">Cytoplasm</location>
    </subcellularLocation>
    <text evidence="7">Although thought of as a cytoplasmic protein it has been found to interact in vitro with a host extracellular protein (PubMed:21203928).</text>
</comment>
<comment type="similarity">
    <text>Belongs to the glyceraldehyde-3-phosphate dehydrogenase family.</text>
</comment>
<keyword id="KW-0963">Cytoplasm</keyword>
<keyword id="KW-0324">Glycolysis</keyword>
<keyword id="KW-0520">NAD</keyword>
<keyword id="KW-0547">Nucleotide-binding</keyword>
<keyword id="KW-0560">Oxidoreductase</keyword>
<evidence type="ECO:0000250" key="1">
    <source>
        <dbReference type="UniProtKB" id="P00362"/>
    </source>
</evidence>
<evidence type="ECO:0000250" key="2">
    <source>
        <dbReference type="UniProtKB" id="P54226"/>
    </source>
</evidence>
<evidence type="ECO:0000250" key="3">
    <source>
        <dbReference type="UniProtKB" id="P9WN83"/>
    </source>
</evidence>
<evidence type="ECO:0000255" key="4">
    <source>
        <dbReference type="PIRSR" id="PIRSR000149-1"/>
    </source>
</evidence>
<evidence type="ECO:0000255" key="5">
    <source>
        <dbReference type="PIRSR" id="PIRSR000149-4"/>
    </source>
</evidence>
<evidence type="ECO:0000255" key="6">
    <source>
        <dbReference type="PROSITE-ProRule" id="PRU10009"/>
    </source>
</evidence>
<evidence type="ECO:0000269" key="7">
    <source>
    </source>
</evidence>
<evidence type="ECO:0000305" key="8"/>
<gene>
    <name type="primary">gap</name>
    <name type="ordered locus">BCG_1497</name>
</gene>
<dbReference type="EC" id="1.2.1.12" evidence="6"/>
<dbReference type="EMBL" id="AM408590">
    <property type="protein sequence ID" value="CAL71484.1"/>
    <property type="molecule type" value="Genomic_DNA"/>
</dbReference>
<dbReference type="RefSeq" id="WP_003407390.1">
    <property type="nucleotide sequence ID" value="NC_008769.1"/>
</dbReference>
<dbReference type="SMR" id="A0A0H3MAB5"/>
<dbReference type="GeneID" id="45425414"/>
<dbReference type="KEGG" id="mbb:BCG_1497"/>
<dbReference type="HOGENOM" id="CLU_030140_0_2_11"/>
<dbReference type="UniPathway" id="UPA00109">
    <property type="reaction ID" value="UER00184"/>
</dbReference>
<dbReference type="Proteomes" id="UP000001472">
    <property type="component" value="Chromosome"/>
</dbReference>
<dbReference type="GO" id="GO:0005737">
    <property type="term" value="C:cytoplasm"/>
    <property type="evidence" value="ECO:0007669"/>
    <property type="project" value="UniProtKB-SubCell"/>
</dbReference>
<dbReference type="GO" id="GO:0004365">
    <property type="term" value="F:glyceraldehyde-3-phosphate dehydrogenase (NAD+) (phosphorylating) activity"/>
    <property type="evidence" value="ECO:0007669"/>
    <property type="project" value="UniProtKB-EC"/>
</dbReference>
<dbReference type="GO" id="GO:0051287">
    <property type="term" value="F:NAD binding"/>
    <property type="evidence" value="ECO:0007669"/>
    <property type="project" value="InterPro"/>
</dbReference>
<dbReference type="GO" id="GO:0050661">
    <property type="term" value="F:NADP binding"/>
    <property type="evidence" value="ECO:0007669"/>
    <property type="project" value="InterPro"/>
</dbReference>
<dbReference type="GO" id="GO:0006006">
    <property type="term" value="P:glucose metabolic process"/>
    <property type="evidence" value="ECO:0007669"/>
    <property type="project" value="InterPro"/>
</dbReference>
<dbReference type="GO" id="GO:0006096">
    <property type="term" value="P:glycolytic process"/>
    <property type="evidence" value="ECO:0007669"/>
    <property type="project" value="UniProtKB-UniPathway"/>
</dbReference>
<dbReference type="CDD" id="cd18126">
    <property type="entry name" value="GAPDH_I_C"/>
    <property type="match status" value="1"/>
</dbReference>
<dbReference type="CDD" id="cd05214">
    <property type="entry name" value="GAPDH_I_N"/>
    <property type="match status" value="1"/>
</dbReference>
<dbReference type="FunFam" id="3.30.360.10:FF:000002">
    <property type="entry name" value="Glyceraldehyde-3-phosphate dehydrogenase"/>
    <property type="match status" value="1"/>
</dbReference>
<dbReference type="FunFam" id="3.40.50.720:FF:000001">
    <property type="entry name" value="Glyceraldehyde-3-phosphate dehydrogenase"/>
    <property type="match status" value="1"/>
</dbReference>
<dbReference type="Gene3D" id="3.30.360.10">
    <property type="entry name" value="Dihydrodipicolinate Reductase, domain 2"/>
    <property type="match status" value="1"/>
</dbReference>
<dbReference type="Gene3D" id="3.40.50.720">
    <property type="entry name" value="NAD(P)-binding Rossmann-like Domain"/>
    <property type="match status" value="1"/>
</dbReference>
<dbReference type="InterPro" id="IPR020831">
    <property type="entry name" value="GlycerAld/Erythrose_P_DH"/>
</dbReference>
<dbReference type="InterPro" id="IPR020830">
    <property type="entry name" value="GlycerAld_3-P_DH_AS"/>
</dbReference>
<dbReference type="InterPro" id="IPR020829">
    <property type="entry name" value="GlycerAld_3-P_DH_cat"/>
</dbReference>
<dbReference type="InterPro" id="IPR020828">
    <property type="entry name" value="GlycerAld_3-P_DH_NAD(P)-bd"/>
</dbReference>
<dbReference type="InterPro" id="IPR006424">
    <property type="entry name" value="Glyceraldehyde-3-P_DH_1"/>
</dbReference>
<dbReference type="InterPro" id="IPR036291">
    <property type="entry name" value="NAD(P)-bd_dom_sf"/>
</dbReference>
<dbReference type="NCBIfam" id="TIGR01534">
    <property type="entry name" value="GAPDH-I"/>
    <property type="match status" value="1"/>
</dbReference>
<dbReference type="PANTHER" id="PTHR43148">
    <property type="entry name" value="GLYCERALDEHYDE-3-PHOSPHATE DEHYDROGENASE 2"/>
    <property type="match status" value="1"/>
</dbReference>
<dbReference type="Pfam" id="PF02800">
    <property type="entry name" value="Gp_dh_C"/>
    <property type="match status" value="1"/>
</dbReference>
<dbReference type="Pfam" id="PF00044">
    <property type="entry name" value="Gp_dh_N"/>
    <property type="match status" value="1"/>
</dbReference>
<dbReference type="PIRSF" id="PIRSF000149">
    <property type="entry name" value="GAP_DH"/>
    <property type="match status" value="1"/>
</dbReference>
<dbReference type="PRINTS" id="PR00078">
    <property type="entry name" value="G3PDHDRGNASE"/>
</dbReference>
<dbReference type="SMART" id="SM00846">
    <property type="entry name" value="Gp_dh_N"/>
    <property type="match status" value="1"/>
</dbReference>
<dbReference type="SUPFAM" id="SSF55347">
    <property type="entry name" value="Glyceraldehyde-3-phosphate dehydrogenase-like, C-terminal domain"/>
    <property type="match status" value="1"/>
</dbReference>
<dbReference type="SUPFAM" id="SSF51735">
    <property type="entry name" value="NAD(P)-binding Rossmann-fold domains"/>
    <property type="match status" value="1"/>
</dbReference>
<dbReference type="PROSITE" id="PS00071">
    <property type="entry name" value="GAPDH"/>
    <property type="match status" value="1"/>
</dbReference>
<accession>A0A0H3MAB5</accession>
<reference key="1">
    <citation type="journal article" date="2007" name="Proc. Natl. Acad. Sci. U.S.A.">
        <title>Genome plasticity of BCG and impact on vaccine efficacy.</title>
        <authorList>
            <person name="Brosch R."/>
            <person name="Gordon S.V."/>
            <person name="Garnier T."/>
            <person name="Eiglmeier K."/>
            <person name="Frigui W."/>
            <person name="Valenti P."/>
            <person name="Dos Santos S."/>
            <person name="Duthoy S."/>
            <person name="Lacroix C."/>
            <person name="Garcia-Pelayo C."/>
            <person name="Inwald J.K."/>
            <person name="Golby P."/>
            <person name="Garcia J.N."/>
            <person name="Hewinson R.G."/>
            <person name="Behr M.A."/>
            <person name="Quail M.A."/>
            <person name="Churcher C."/>
            <person name="Barrell B.G."/>
            <person name="Parkhill J."/>
            <person name="Cole S.T."/>
        </authorList>
    </citation>
    <scope>NUCLEOTIDE SEQUENCE [LARGE SCALE GENOMIC DNA]</scope>
    <source>
        <strain>BCG / Pasteur 1173P2</strain>
    </source>
</reference>
<reference key="2">
    <citation type="journal article" date="2010" name="Protein Cell">
        <title>Identification of four novel DC-SIGN ligands on Mycobacterium bovis BCG.</title>
        <authorList>
            <person name="Carroll M.V."/>
            <person name="Sim R.B."/>
            <person name="Bigi F."/>
            <person name="Jaekel A."/>
            <person name="Antrobus R."/>
            <person name="Mitchell D.A."/>
        </authorList>
    </citation>
    <scope>FUNCTION</scope>
    <scope>IDENTIFICATION BY MASS SPECTROMETRY</scope>
    <scope>INTERACTION WITH HUMAN CD209</scope>
    <source>
        <strain>BCG / Pasteur 1173P2</strain>
    </source>
</reference>
<sequence length="339" mass="35956">MTVRVGINGFGRIGRNFYRALLAQQEQGTADVEVVAANDITDNSTLAHLLKFDSILGRLPCDVGLEGDDTIVVGRAKIKALAVREGPAALPWGDLGVDVVVESTGLFTNAAKAKGHLDAGAKKVIISAPATDEDITIVLGVNDDKYDGSQNIISNASCTTNCLAPLAKVLDDEFGIVKGLMTTIHAYTQDQNLQDGPHKDLRRARAAALNIVPTSTGAAKAIGLVMPQLKGKLDGYALRVPIPTGSVTDLTVDLSTRASVDEINAAFKAAAEGRLKGILKYYDAPIVSSDIVTDPHSSIFDSGLTKVIDDQAKVVSWYDNEWGYSNRLVDLVTLVGKSL</sequence>
<feature type="chain" id="PRO_0000437462" description="Glyceraldehyde-3-phosphate dehydrogenase">
    <location>
        <begin position="1"/>
        <end position="339"/>
    </location>
</feature>
<feature type="active site" description="Nucleophile" evidence="1 4">
    <location>
        <position position="158"/>
    </location>
</feature>
<feature type="binding site" evidence="1">
    <location>
        <begin position="12"/>
        <end position="13"/>
    </location>
    <ligand>
        <name>NAD(+)</name>
        <dbReference type="ChEBI" id="CHEBI:57540"/>
    </ligand>
</feature>
<feature type="binding site" evidence="1">
    <location>
        <position position="39"/>
    </location>
    <ligand>
        <name>NAD(+)</name>
        <dbReference type="ChEBI" id="CHEBI:57540"/>
    </ligand>
</feature>
<feature type="binding site" evidence="1">
    <location>
        <position position="84"/>
    </location>
    <ligand>
        <name>NAD(+)</name>
        <dbReference type="ChEBI" id="CHEBI:57540"/>
    </ligand>
</feature>
<feature type="binding site" evidence="1">
    <location>
        <position position="127"/>
    </location>
    <ligand>
        <name>NAD(+)</name>
        <dbReference type="ChEBI" id="CHEBI:57540"/>
    </ligand>
</feature>
<feature type="binding site" evidence="1">
    <location>
        <begin position="157"/>
        <end position="159"/>
    </location>
    <ligand>
        <name>D-glyceraldehyde 3-phosphate</name>
        <dbReference type="ChEBI" id="CHEBI:59776"/>
    </ligand>
</feature>
<feature type="binding site" evidence="1">
    <location>
        <position position="188"/>
    </location>
    <ligand>
        <name>D-glyceraldehyde 3-phosphate</name>
        <dbReference type="ChEBI" id="CHEBI:59776"/>
    </ligand>
</feature>
<feature type="binding site" evidence="1">
    <location>
        <position position="203"/>
    </location>
    <ligand>
        <name>D-glyceraldehyde 3-phosphate</name>
        <dbReference type="ChEBI" id="CHEBI:59776"/>
    </ligand>
</feature>
<feature type="binding site" evidence="1">
    <location>
        <begin position="216"/>
        <end position="217"/>
    </location>
    <ligand>
        <name>D-glyceraldehyde 3-phosphate</name>
        <dbReference type="ChEBI" id="CHEBI:59776"/>
    </ligand>
</feature>
<feature type="binding site" evidence="1">
    <location>
        <position position="239"/>
    </location>
    <ligand>
        <name>D-glyceraldehyde 3-phosphate</name>
        <dbReference type="ChEBI" id="CHEBI:59776"/>
    </ligand>
</feature>
<feature type="binding site" evidence="1">
    <location>
        <position position="320"/>
    </location>
    <ligand>
        <name>NAD(+)</name>
        <dbReference type="ChEBI" id="CHEBI:57540"/>
    </ligand>
</feature>
<feature type="site" description="Activates thiol group during catalysis" evidence="5">
    <location>
        <position position="185"/>
    </location>
</feature>
<name>G3P_MYCBP</name>
<protein>
    <recommendedName>
        <fullName>Glyceraldehyde-3-phosphate dehydrogenase</fullName>
        <shortName>GAPDH</shortName>
        <ecNumber evidence="6">1.2.1.12</ecNumber>
    </recommendedName>
    <alternativeName>
        <fullName>NAD-dependent glyceraldehyde-3-phosphate dehydrogenase</fullName>
    </alternativeName>
</protein>
<organism>
    <name type="scientific">Mycobacterium bovis (strain BCG / Pasteur 1173P2)</name>
    <dbReference type="NCBI Taxonomy" id="410289"/>
    <lineage>
        <taxon>Bacteria</taxon>
        <taxon>Bacillati</taxon>
        <taxon>Actinomycetota</taxon>
        <taxon>Actinomycetes</taxon>
        <taxon>Mycobacteriales</taxon>
        <taxon>Mycobacteriaceae</taxon>
        <taxon>Mycobacterium</taxon>
        <taxon>Mycobacterium tuberculosis complex</taxon>
    </lineage>
</organism>
<proteinExistence type="evidence at protein level"/>